<comment type="function">
    <text>Ligand for members of the frizzled family of seven transmembrane receptors. Probable developmental protein. May be a signaling molecule which affects the development of discrete regions of tissues. Is likely to signal over only few cell diameters.</text>
</comment>
<comment type="subcellular location">
    <subcellularLocation>
        <location>Secreted</location>
        <location>Extracellular space</location>
        <location>Extracellular matrix</location>
    </subcellularLocation>
</comment>
<comment type="PTM">
    <text evidence="1 3">Palmitoleoylation is required for efficient binding to frizzled receptors. Depalmitoleoylation leads to Wnt signaling pathway inhibition.</text>
</comment>
<comment type="similarity">
    <text evidence="6">Belongs to the Wnt family.</text>
</comment>
<proteinExistence type="inferred from homology"/>
<keyword id="KW-0217">Developmental protein</keyword>
<keyword id="KW-1015">Disulfide bond</keyword>
<keyword id="KW-0272">Extracellular matrix</keyword>
<keyword id="KW-0325">Glycoprotein</keyword>
<keyword id="KW-0449">Lipoprotein</keyword>
<keyword id="KW-0964">Secreted</keyword>
<keyword id="KW-0879">Wnt signaling pathway</keyword>
<sequence length="130" mass="14569">SGSCTVRTCWRQLAPFTEMGRSLKQRYDVAVKVLSMTNEAAGERTIARSRRRPREQRGQRRPKVSDGALTPRGIDLVYVEDSPSYCRASRYSPGTANRSCQKGRNCDSICCGRGYNTRVSSVQKPCQCQV</sequence>
<gene>
    <name type="primary">WNT-9</name>
</gene>
<organism>
    <name type="scientific">Eptatretus stoutii</name>
    <name type="common">Pacific hagfish</name>
    <dbReference type="NCBI Taxonomy" id="7765"/>
    <lineage>
        <taxon>Eukaryota</taxon>
        <taxon>Metazoa</taxon>
        <taxon>Chordata</taxon>
        <taxon>Craniata</taxon>
        <taxon>Vertebrata</taxon>
        <taxon>Cyclostomata</taxon>
        <taxon>Myxini</taxon>
        <taxon>Myxiniformes</taxon>
        <taxon>Myxinidae</taxon>
        <taxon>Eptatretinae</taxon>
        <taxon>Eptatretus</taxon>
    </lineage>
</organism>
<feature type="chain" id="PRO_0000200661" description="Protein Wnt-9">
    <location>
        <begin position="1" status="less than"/>
        <end position="130" status="greater than"/>
    </location>
</feature>
<feature type="region of interest" description="Disordered" evidence="5">
    <location>
        <begin position="41"/>
        <end position="69"/>
    </location>
</feature>
<feature type="compositionally biased region" description="Basic residues" evidence="5">
    <location>
        <begin position="47"/>
        <end position="62"/>
    </location>
</feature>
<feature type="lipid moiety-binding region" description="O-palmitoleoyl serine; by PORCN" evidence="3">
    <location>
        <position position="1"/>
    </location>
</feature>
<feature type="glycosylation site" description="N-linked (GlcNAc...) asparagine" evidence="4">
    <location>
        <position position="97"/>
    </location>
</feature>
<feature type="disulfide bond" evidence="2">
    <location>
        <begin position="100"/>
        <end position="111"/>
    </location>
</feature>
<feature type="non-terminal residue">
    <location>
        <position position="1"/>
    </location>
</feature>
<feature type="non-terminal residue">
    <location>
        <position position="130"/>
    </location>
</feature>
<dbReference type="EMBL" id="M91271">
    <property type="protein sequence ID" value="AAA49252.1"/>
    <property type="molecule type" value="Genomic_DNA"/>
</dbReference>
<dbReference type="SMR" id="P28124"/>
<dbReference type="GlyCosmos" id="P28124">
    <property type="glycosylation" value="1 site, No reported glycans"/>
</dbReference>
<dbReference type="GO" id="GO:0005615">
    <property type="term" value="C:extracellular space"/>
    <property type="evidence" value="ECO:0007669"/>
    <property type="project" value="TreeGrafter"/>
</dbReference>
<dbReference type="GO" id="GO:0005125">
    <property type="term" value="F:cytokine activity"/>
    <property type="evidence" value="ECO:0007669"/>
    <property type="project" value="TreeGrafter"/>
</dbReference>
<dbReference type="GO" id="GO:0005109">
    <property type="term" value="F:frizzled binding"/>
    <property type="evidence" value="ECO:0007669"/>
    <property type="project" value="TreeGrafter"/>
</dbReference>
<dbReference type="GO" id="GO:0060070">
    <property type="term" value="P:canonical Wnt signaling pathway"/>
    <property type="evidence" value="ECO:0007669"/>
    <property type="project" value="TreeGrafter"/>
</dbReference>
<dbReference type="GO" id="GO:0045165">
    <property type="term" value="P:cell fate commitment"/>
    <property type="evidence" value="ECO:0007669"/>
    <property type="project" value="TreeGrafter"/>
</dbReference>
<dbReference type="GO" id="GO:0030182">
    <property type="term" value="P:neuron differentiation"/>
    <property type="evidence" value="ECO:0007669"/>
    <property type="project" value="TreeGrafter"/>
</dbReference>
<dbReference type="InterPro" id="IPR005817">
    <property type="entry name" value="Wnt"/>
</dbReference>
<dbReference type="PANTHER" id="PTHR12027:SF97">
    <property type="entry name" value="PROTEIN WNT-4"/>
    <property type="match status" value="1"/>
</dbReference>
<dbReference type="PANTHER" id="PTHR12027">
    <property type="entry name" value="WNT RELATED"/>
    <property type="match status" value="1"/>
</dbReference>
<dbReference type="Pfam" id="PF00110">
    <property type="entry name" value="wnt"/>
    <property type="match status" value="1"/>
</dbReference>
<dbReference type="SMART" id="SM00097">
    <property type="entry name" value="WNT1"/>
    <property type="match status" value="1"/>
</dbReference>
<name>WNT9_EPTST</name>
<reference key="1">
    <citation type="journal article" date="1992" name="Proc. Natl. Acad. Sci. U.S.A.">
        <title>Diversification of the Wnt gene family on the ancestral lineage of vertebrates.</title>
        <authorList>
            <person name="Sidow A."/>
        </authorList>
    </citation>
    <scope>NUCLEOTIDE SEQUENCE [GENOMIC DNA]</scope>
</reference>
<evidence type="ECO:0000250" key="1">
    <source>
        <dbReference type="UniProtKB" id="P27467"/>
    </source>
</evidence>
<evidence type="ECO:0000250" key="2">
    <source>
        <dbReference type="UniProtKB" id="P28026"/>
    </source>
</evidence>
<evidence type="ECO:0000250" key="3">
    <source>
        <dbReference type="UniProtKB" id="P56704"/>
    </source>
</evidence>
<evidence type="ECO:0000255" key="4"/>
<evidence type="ECO:0000256" key="5">
    <source>
        <dbReference type="SAM" id="MobiDB-lite"/>
    </source>
</evidence>
<evidence type="ECO:0000305" key="6"/>
<accession>P28124</accession>
<protein>
    <recommendedName>
        <fullName>Protein Wnt-9</fullName>
    </recommendedName>
</protein>